<accession>Q2LTQ4</accession>
<keyword id="KW-0963">Cytoplasm</keyword>
<keyword id="KW-0648">Protein biosynthesis</keyword>
<keyword id="KW-1185">Reference proteome</keyword>
<feature type="chain" id="PRO_1000003293" description="Ribosome-recycling factor">
    <location>
        <begin position="1"/>
        <end position="185"/>
    </location>
</feature>
<reference key="1">
    <citation type="journal article" date="2007" name="Proc. Natl. Acad. Sci. U.S.A.">
        <title>The genome of Syntrophus aciditrophicus: life at the thermodynamic limit of microbial growth.</title>
        <authorList>
            <person name="McInerney M.J."/>
            <person name="Rohlin L."/>
            <person name="Mouttaki H."/>
            <person name="Kim U."/>
            <person name="Krupp R.S."/>
            <person name="Rios-Hernandez L."/>
            <person name="Sieber J."/>
            <person name="Struchtemeyer C.G."/>
            <person name="Bhattacharyya A."/>
            <person name="Campbell J.W."/>
            <person name="Gunsalus R.P."/>
        </authorList>
    </citation>
    <scope>NUCLEOTIDE SEQUENCE [LARGE SCALE GENOMIC DNA]</scope>
    <source>
        <strain>SB</strain>
    </source>
</reference>
<sequence length="185" mass="21185">MKDMVFDELKQNMEKGLQALEKSFNKVRTGRASISLLDGIKADYYGTPTPLNQVATLSVPESRQILISPWDTSALNAIEKAIQKSDLGLVPNNDGKVIRISIPPLTEARRKELVKVVRKMAEECKVKLRNARRDANEEFKSMKKNNDISEDQMHDYQDQVQKMTDSYIEKSEDILVQKEKEIMEI</sequence>
<name>RRF_SYNAS</name>
<proteinExistence type="inferred from homology"/>
<gene>
    <name evidence="1" type="primary">frr</name>
    <name type="ordered locus">SYNAS_15880</name>
    <name type="ORF">SYN_00919</name>
</gene>
<protein>
    <recommendedName>
        <fullName evidence="1">Ribosome-recycling factor</fullName>
        <shortName evidence="1">RRF</shortName>
    </recommendedName>
    <alternativeName>
        <fullName evidence="1">Ribosome-releasing factor</fullName>
    </alternativeName>
</protein>
<comment type="function">
    <text evidence="1">Responsible for the release of ribosomes from messenger RNA at the termination of protein biosynthesis. May increase the efficiency of translation by recycling ribosomes from one round of translation to another.</text>
</comment>
<comment type="subcellular location">
    <subcellularLocation>
        <location evidence="1">Cytoplasm</location>
    </subcellularLocation>
</comment>
<comment type="similarity">
    <text evidence="1">Belongs to the RRF family.</text>
</comment>
<dbReference type="EMBL" id="CP000252">
    <property type="protein sequence ID" value="ABC77467.1"/>
    <property type="molecule type" value="Genomic_DNA"/>
</dbReference>
<dbReference type="RefSeq" id="WP_011417489.1">
    <property type="nucleotide sequence ID" value="NC_007759.1"/>
</dbReference>
<dbReference type="SMR" id="Q2LTQ4"/>
<dbReference type="FunCoup" id="Q2LTQ4">
    <property type="interactions" value="499"/>
</dbReference>
<dbReference type="STRING" id="56780.SYN_00919"/>
<dbReference type="KEGG" id="sat:SYN_00919"/>
<dbReference type="eggNOG" id="COG0233">
    <property type="taxonomic scope" value="Bacteria"/>
</dbReference>
<dbReference type="HOGENOM" id="CLU_073981_2_0_7"/>
<dbReference type="InParanoid" id="Q2LTQ4"/>
<dbReference type="OrthoDB" id="9804006at2"/>
<dbReference type="Proteomes" id="UP000001933">
    <property type="component" value="Chromosome"/>
</dbReference>
<dbReference type="GO" id="GO:0005737">
    <property type="term" value="C:cytoplasm"/>
    <property type="evidence" value="ECO:0007669"/>
    <property type="project" value="UniProtKB-SubCell"/>
</dbReference>
<dbReference type="GO" id="GO:0043023">
    <property type="term" value="F:ribosomal large subunit binding"/>
    <property type="evidence" value="ECO:0007669"/>
    <property type="project" value="TreeGrafter"/>
</dbReference>
<dbReference type="GO" id="GO:0006415">
    <property type="term" value="P:translational termination"/>
    <property type="evidence" value="ECO:0007669"/>
    <property type="project" value="UniProtKB-UniRule"/>
</dbReference>
<dbReference type="CDD" id="cd00520">
    <property type="entry name" value="RRF"/>
    <property type="match status" value="1"/>
</dbReference>
<dbReference type="FunFam" id="1.10.132.20:FF:000001">
    <property type="entry name" value="Ribosome-recycling factor"/>
    <property type="match status" value="1"/>
</dbReference>
<dbReference type="FunFam" id="3.30.1360.40:FF:000001">
    <property type="entry name" value="Ribosome-recycling factor"/>
    <property type="match status" value="1"/>
</dbReference>
<dbReference type="Gene3D" id="3.30.1360.40">
    <property type="match status" value="1"/>
</dbReference>
<dbReference type="Gene3D" id="1.10.132.20">
    <property type="entry name" value="Ribosome-recycling factor"/>
    <property type="match status" value="1"/>
</dbReference>
<dbReference type="HAMAP" id="MF_00040">
    <property type="entry name" value="RRF"/>
    <property type="match status" value="1"/>
</dbReference>
<dbReference type="InterPro" id="IPR002661">
    <property type="entry name" value="Ribosome_recyc_fac"/>
</dbReference>
<dbReference type="InterPro" id="IPR023584">
    <property type="entry name" value="Ribosome_recyc_fac_dom"/>
</dbReference>
<dbReference type="InterPro" id="IPR036191">
    <property type="entry name" value="RRF_sf"/>
</dbReference>
<dbReference type="NCBIfam" id="TIGR00496">
    <property type="entry name" value="frr"/>
    <property type="match status" value="1"/>
</dbReference>
<dbReference type="PANTHER" id="PTHR20982:SF3">
    <property type="entry name" value="MITOCHONDRIAL RIBOSOME RECYCLING FACTOR PSEUDO 1"/>
    <property type="match status" value="1"/>
</dbReference>
<dbReference type="PANTHER" id="PTHR20982">
    <property type="entry name" value="RIBOSOME RECYCLING FACTOR"/>
    <property type="match status" value="1"/>
</dbReference>
<dbReference type="Pfam" id="PF01765">
    <property type="entry name" value="RRF"/>
    <property type="match status" value="1"/>
</dbReference>
<dbReference type="SUPFAM" id="SSF55194">
    <property type="entry name" value="Ribosome recycling factor, RRF"/>
    <property type="match status" value="1"/>
</dbReference>
<evidence type="ECO:0000255" key="1">
    <source>
        <dbReference type="HAMAP-Rule" id="MF_00040"/>
    </source>
</evidence>
<organism>
    <name type="scientific">Syntrophus aciditrophicus (strain SB)</name>
    <dbReference type="NCBI Taxonomy" id="56780"/>
    <lineage>
        <taxon>Bacteria</taxon>
        <taxon>Pseudomonadati</taxon>
        <taxon>Thermodesulfobacteriota</taxon>
        <taxon>Syntrophia</taxon>
        <taxon>Syntrophales</taxon>
        <taxon>Syntrophaceae</taxon>
        <taxon>Syntrophus</taxon>
    </lineage>
</organism>